<accession>Q04AM5</accession>
<sequence length="186" mass="22165">MQRIWISGYRGYELGTFGDKDPKITVIKYAIKQCLTNLLEEGQLDWVITGANLGVEQWSAEVALELRQDYNLRLAVMLPYLDFGSRWSENNQLKLQNLKNQADFWSATSKGPYQGGRQFREYQQFMFQHTDRALLVYDPEYPGKSKYDYEMIEKYLEKRDDYQLDLVDYYDLEQAARDYEGNQREW</sequence>
<dbReference type="EMBL" id="CP000412">
    <property type="protein sequence ID" value="ABJ58497.1"/>
    <property type="molecule type" value="Genomic_DNA"/>
</dbReference>
<dbReference type="RefSeq" id="WP_011678235.1">
    <property type="nucleotide sequence ID" value="NC_008529.1"/>
</dbReference>
<dbReference type="SMR" id="Q04AM5"/>
<dbReference type="KEGG" id="lbu:LBUL_0921"/>
<dbReference type="HOGENOM" id="CLU_105319_0_0_9"/>
<dbReference type="BioCyc" id="LDEL321956:LBUL_RS04400-MONOMER"/>
<dbReference type="Gene3D" id="3.40.50.450">
    <property type="match status" value="1"/>
</dbReference>
<dbReference type="HAMAP" id="MF_01575">
    <property type="entry name" value="UPF0398"/>
    <property type="match status" value="1"/>
</dbReference>
<dbReference type="InterPro" id="IPR010697">
    <property type="entry name" value="YspA"/>
</dbReference>
<dbReference type="NCBIfam" id="NF010181">
    <property type="entry name" value="PRK13660.1"/>
    <property type="match status" value="1"/>
</dbReference>
<dbReference type="PANTHER" id="PTHR38440:SF1">
    <property type="entry name" value="UPF0398 PROTEIN SPR0331"/>
    <property type="match status" value="1"/>
</dbReference>
<dbReference type="PANTHER" id="PTHR38440">
    <property type="entry name" value="UPF0398 PROTEIN YPSA"/>
    <property type="match status" value="1"/>
</dbReference>
<dbReference type="Pfam" id="PF06908">
    <property type="entry name" value="YpsA"/>
    <property type="match status" value="1"/>
</dbReference>
<dbReference type="PIRSF" id="PIRSF021290">
    <property type="entry name" value="DUF1273"/>
    <property type="match status" value="1"/>
</dbReference>
<dbReference type="SUPFAM" id="SSF102405">
    <property type="entry name" value="MCP/YpsA-like"/>
    <property type="match status" value="1"/>
</dbReference>
<evidence type="ECO:0000255" key="1">
    <source>
        <dbReference type="HAMAP-Rule" id="MF_01575"/>
    </source>
</evidence>
<reference key="1">
    <citation type="journal article" date="2006" name="Proc. Natl. Acad. Sci. U.S.A.">
        <title>Comparative genomics of the lactic acid bacteria.</title>
        <authorList>
            <person name="Makarova K.S."/>
            <person name="Slesarev A."/>
            <person name="Wolf Y.I."/>
            <person name="Sorokin A."/>
            <person name="Mirkin B."/>
            <person name="Koonin E.V."/>
            <person name="Pavlov A."/>
            <person name="Pavlova N."/>
            <person name="Karamychev V."/>
            <person name="Polouchine N."/>
            <person name="Shakhova V."/>
            <person name="Grigoriev I."/>
            <person name="Lou Y."/>
            <person name="Rohksar D."/>
            <person name="Lucas S."/>
            <person name="Huang K."/>
            <person name="Goodstein D.M."/>
            <person name="Hawkins T."/>
            <person name="Plengvidhya V."/>
            <person name="Welker D."/>
            <person name="Hughes J."/>
            <person name="Goh Y."/>
            <person name="Benson A."/>
            <person name="Baldwin K."/>
            <person name="Lee J.-H."/>
            <person name="Diaz-Muniz I."/>
            <person name="Dosti B."/>
            <person name="Smeianov V."/>
            <person name="Wechter W."/>
            <person name="Barabote R."/>
            <person name="Lorca G."/>
            <person name="Altermann E."/>
            <person name="Barrangou R."/>
            <person name="Ganesan B."/>
            <person name="Xie Y."/>
            <person name="Rawsthorne H."/>
            <person name="Tamir D."/>
            <person name="Parker C."/>
            <person name="Breidt F."/>
            <person name="Broadbent J.R."/>
            <person name="Hutkins R."/>
            <person name="O'Sullivan D."/>
            <person name="Steele J."/>
            <person name="Unlu G."/>
            <person name="Saier M.H. Jr."/>
            <person name="Klaenhammer T."/>
            <person name="Richardson P."/>
            <person name="Kozyavkin S."/>
            <person name="Weimer B.C."/>
            <person name="Mills D.A."/>
        </authorList>
    </citation>
    <scope>NUCLEOTIDE SEQUENCE [LARGE SCALE GENOMIC DNA]</scope>
    <source>
        <strain>ATCC BAA-365 / Lb-18</strain>
    </source>
</reference>
<gene>
    <name type="ordered locus">LBUL_0921</name>
</gene>
<name>Y921_LACDB</name>
<proteinExistence type="inferred from homology"/>
<feature type="chain" id="PRO_1000069212" description="UPF0398 protein LBUL_0921">
    <location>
        <begin position="1"/>
        <end position="186"/>
    </location>
</feature>
<comment type="similarity">
    <text evidence="1">Belongs to the UPF0398 family.</text>
</comment>
<organism>
    <name type="scientific">Lactobacillus delbrueckii subsp. bulgaricus (strain ATCC BAA-365 / Lb-18)</name>
    <dbReference type="NCBI Taxonomy" id="321956"/>
    <lineage>
        <taxon>Bacteria</taxon>
        <taxon>Bacillati</taxon>
        <taxon>Bacillota</taxon>
        <taxon>Bacilli</taxon>
        <taxon>Lactobacillales</taxon>
        <taxon>Lactobacillaceae</taxon>
        <taxon>Lactobacillus</taxon>
    </lineage>
</organism>
<protein>
    <recommendedName>
        <fullName evidence="1">UPF0398 protein LBUL_0921</fullName>
    </recommendedName>
</protein>